<sequence length="64" mass="7251">MGMRMMFTLFLLVVLTTTVVSYPSDSASDGRDDEAKDERSDMYELKRNGRCCHPACGKHFNCGR</sequence>
<dbReference type="EMBL" id="DQ359138">
    <property type="protein sequence ID" value="ABD48789.1"/>
    <property type="molecule type" value="mRNA"/>
</dbReference>
<dbReference type="EMBL" id="DQ311072">
    <property type="protein sequence ID" value="ABD33864.1"/>
    <property type="molecule type" value="Genomic_DNA"/>
</dbReference>
<dbReference type="ConoServer" id="562">
    <property type="toxin name" value="Ac1.1a precursor"/>
</dbReference>
<dbReference type="ConoServer" id="570">
    <property type="toxin name" value="Ac1.1a precursor"/>
</dbReference>
<dbReference type="GO" id="GO:0005576">
    <property type="term" value="C:extracellular region"/>
    <property type="evidence" value="ECO:0007669"/>
    <property type="project" value="UniProtKB-SubCell"/>
</dbReference>
<dbReference type="GO" id="GO:0035792">
    <property type="term" value="C:host cell postsynaptic membrane"/>
    <property type="evidence" value="ECO:0007669"/>
    <property type="project" value="UniProtKB-KW"/>
</dbReference>
<dbReference type="GO" id="GO:0030550">
    <property type="term" value="F:acetylcholine receptor inhibitor activity"/>
    <property type="evidence" value="ECO:0007669"/>
    <property type="project" value="UniProtKB-KW"/>
</dbReference>
<dbReference type="GO" id="GO:0099106">
    <property type="term" value="F:ion channel regulator activity"/>
    <property type="evidence" value="ECO:0007669"/>
    <property type="project" value="UniProtKB-KW"/>
</dbReference>
<dbReference type="GO" id="GO:0090729">
    <property type="term" value="F:toxin activity"/>
    <property type="evidence" value="ECO:0007669"/>
    <property type="project" value="UniProtKB-KW"/>
</dbReference>
<dbReference type="InterPro" id="IPR009958">
    <property type="entry name" value="Conotoxin_a-typ"/>
</dbReference>
<dbReference type="Pfam" id="PF07365">
    <property type="entry name" value="Toxin_8"/>
    <property type="match status" value="1"/>
</dbReference>
<reference key="1">
    <citation type="journal article" date="2007" name="Toxicon">
        <title>From the identification of gene organization of alpha conotoxins to the cloning of novel toxins.</title>
        <authorList>
            <person name="Yuan D.-D."/>
            <person name="Han Y.-H."/>
            <person name="Wang C.-G."/>
            <person name="Chi C.-W."/>
        </authorList>
    </citation>
    <scope>NUCLEOTIDE SEQUENCE [GENOMIC DNA / MRNA]</scope>
</reference>
<name>CA11A_CONAH</name>
<keyword id="KW-0008">Acetylcholine receptor inhibiting toxin</keyword>
<keyword id="KW-0027">Amidation</keyword>
<keyword id="KW-0165">Cleavage on pair of basic residues</keyword>
<keyword id="KW-1015">Disulfide bond</keyword>
<keyword id="KW-0872">Ion channel impairing toxin</keyword>
<keyword id="KW-0528">Neurotoxin</keyword>
<keyword id="KW-0629">Postsynaptic neurotoxin</keyword>
<keyword id="KW-0964">Secreted</keyword>
<keyword id="KW-0732">Signal</keyword>
<keyword id="KW-0800">Toxin</keyword>
<evidence type="ECO:0000250" key="1"/>
<evidence type="ECO:0000250" key="2">
    <source>
        <dbReference type="UniProtKB" id="P01519"/>
    </source>
</evidence>
<evidence type="ECO:0000255" key="3"/>
<evidence type="ECO:0000305" key="4"/>
<feature type="signal peptide" evidence="3">
    <location>
        <begin position="1"/>
        <end position="21"/>
    </location>
</feature>
<feature type="propeptide" id="PRO_0000370640" evidence="1">
    <location>
        <begin position="22"/>
        <end position="47"/>
    </location>
</feature>
<feature type="peptide" id="PRO_0000370641" description="Alpha-conotoxin-like Ac1.1a">
    <location>
        <begin position="48"/>
        <end position="62"/>
    </location>
</feature>
<feature type="modified residue" description="Cysteine amide" evidence="1">
    <location>
        <position position="62"/>
    </location>
</feature>
<feature type="disulfide bond" evidence="2">
    <location>
        <begin position="51"/>
        <end position="56"/>
    </location>
</feature>
<feature type="disulfide bond" evidence="2">
    <location>
        <begin position="52"/>
        <end position="62"/>
    </location>
</feature>
<feature type="sequence conflict" description="In Ref. 1; ABD33864." evidence="4" ref="1">
    <original>K</original>
    <variation>I</variation>
    <location>
        <position position="36"/>
    </location>
</feature>
<organism>
    <name type="scientific">Conus achatinus</name>
    <name type="common">Little frog cone</name>
    <dbReference type="NCBI Taxonomy" id="369967"/>
    <lineage>
        <taxon>Eukaryota</taxon>
        <taxon>Metazoa</taxon>
        <taxon>Spiralia</taxon>
        <taxon>Lophotrochozoa</taxon>
        <taxon>Mollusca</taxon>
        <taxon>Gastropoda</taxon>
        <taxon>Caenogastropoda</taxon>
        <taxon>Neogastropoda</taxon>
        <taxon>Conoidea</taxon>
        <taxon>Conidae</taxon>
        <taxon>Conus</taxon>
        <taxon>Pionoconus</taxon>
    </lineage>
</organism>
<accession>P0CAQ4</accession>
<accession>A1X8B5</accession>
<accession>A3DT43</accession>
<accession>A6M932</accession>
<accession>A6M933</accession>
<comment type="function">
    <text evidence="1">Alpha-conotoxins act on postsynaptic membranes, they bind to the nicotinic acetylcholine receptors (nAChR) and thus inhibit them.</text>
</comment>
<comment type="subcellular location">
    <subcellularLocation>
        <location evidence="1">Secreted</location>
    </subcellularLocation>
</comment>
<comment type="tissue specificity">
    <text>Expressed by the venom duct.</text>
</comment>
<comment type="domain">
    <text>The cysteine framework is I (CC-C-C). Alpha3/5 pattern.</text>
</comment>
<comment type="similarity">
    <text evidence="4">Belongs to the conotoxin A superfamily.</text>
</comment>
<proteinExistence type="evidence at transcript level"/>
<protein>
    <recommendedName>
        <fullName>Alpha-conotoxin-like Ac1.1a</fullName>
    </recommendedName>
</protein>